<name>ENGB_KORVE</name>
<dbReference type="EMBL" id="CP000360">
    <property type="protein sequence ID" value="ABF40598.1"/>
    <property type="molecule type" value="Genomic_DNA"/>
</dbReference>
<dbReference type="RefSeq" id="WP_011522400.1">
    <property type="nucleotide sequence ID" value="NC_008009.1"/>
</dbReference>
<dbReference type="SMR" id="Q1IRA2"/>
<dbReference type="STRING" id="204669.Acid345_1596"/>
<dbReference type="EnsemblBacteria" id="ABF40598">
    <property type="protein sequence ID" value="ABF40598"/>
    <property type="gene ID" value="Acid345_1596"/>
</dbReference>
<dbReference type="KEGG" id="aba:Acid345_1596"/>
<dbReference type="eggNOG" id="COG0218">
    <property type="taxonomic scope" value="Bacteria"/>
</dbReference>
<dbReference type="HOGENOM" id="CLU_033732_3_2_0"/>
<dbReference type="OrthoDB" id="9804921at2"/>
<dbReference type="Proteomes" id="UP000002432">
    <property type="component" value="Chromosome"/>
</dbReference>
<dbReference type="GO" id="GO:0005525">
    <property type="term" value="F:GTP binding"/>
    <property type="evidence" value="ECO:0007669"/>
    <property type="project" value="UniProtKB-UniRule"/>
</dbReference>
<dbReference type="GO" id="GO:0046872">
    <property type="term" value="F:metal ion binding"/>
    <property type="evidence" value="ECO:0007669"/>
    <property type="project" value="UniProtKB-KW"/>
</dbReference>
<dbReference type="GO" id="GO:0000917">
    <property type="term" value="P:division septum assembly"/>
    <property type="evidence" value="ECO:0007669"/>
    <property type="project" value="UniProtKB-KW"/>
</dbReference>
<dbReference type="CDD" id="cd01876">
    <property type="entry name" value="YihA_EngB"/>
    <property type="match status" value="1"/>
</dbReference>
<dbReference type="Gene3D" id="3.40.50.300">
    <property type="entry name" value="P-loop containing nucleotide triphosphate hydrolases"/>
    <property type="match status" value="1"/>
</dbReference>
<dbReference type="HAMAP" id="MF_00321">
    <property type="entry name" value="GTPase_EngB"/>
    <property type="match status" value="1"/>
</dbReference>
<dbReference type="InterPro" id="IPR030393">
    <property type="entry name" value="G_ENGB_dom"/>
</dbReference>
<dbReference type="InterPro" id="IPR006073">
    <property type="entry name" value="GTP-bd"/>
</dbReference>
<dbReference type="InterPro" id="IPR019987">
    <property type="entry name" value="GTP-bd_ribosome_bio_YsxC"/>
</dbReference>
<dbReference type="InterPro" id="IPR027417">
    <property type="entry name" value="P-loop_NTPase"/>
</dbReference>
<dbReference type="InterPro" id="IPR005225">
    <property type="entry name" value="Small_GTP-bd"/>
</dbReference>
<dbReference type="NCBIfam" id="TIGR03598">
    <property type="entry name" value="GTPase_YsxC"/>
    <property type="match status" value="1"/>
</dbReference>
<dbReference type="NCBIfam" id="TIGR00231">
    <property type="entry name" value="small_GTP"/>
    <property type="match status" value="1"/>
</dbReference>
<dbReference type="PANTHER" id="PTHR11649:SF13">
    <property type="entry name" value="ENGB-TYPE G DOMAIN-CONTAINING PROTEIN"/>
    <property type="match status" value="1"/>
</dbReference>
<dbReference type="PANTHER" id="PTHR11649">
    <property type="entry name" value="MSS1/TRME-RELATED GTP-BINDING PROTEIN"/>
    <property type="match status" value="1"/>
</dbReference>
<dbReference type="Pfam" id="PF01926">
    <property type="entry name" value="MMR_HSR1"/>
    <property type="match status" value="1"/>
</dbReference>
<dbReference type="SUPFAM" id="SSF52540">
    <property type="entry name" value="P-loop containing nucleoside triphosphate hydrolases"/>
    <property type="match status" value="1"/>
</dbReference>
<dbReference type="PROSITE" id="PS51706">
    <property type="entry name" value="G_ENGB"/>
    <property type="match status" value="1"/>
</dbReference>
<sequence length="203" mass="22403">MRVLTRFMLSAADARQFPAAGAPEIAFLGRSNVGKSSLINAIVGSKIAKTSSTPGRTQTINFFEIRRPGKPRPDWIFADLPGYGYARVPKELTAEWPKFIDPYLHERPTLALCVSIVDVSVPPQKKDLELLNWLRHVGRPFVVVGTKIDRVSGNQLRNNLLKLKEELLVEEVVPFSAKGTTGHNELWKKIFEAAGTDAPATAG</sequence>
<feature type="chain" id="PRO_0000266803" description="Probable GTP-binding protein EngB">
    <location>
        <begin position="1"/>
        <end position="203"/>
    </location>
</feature>
<feature type="domain" description="EngB-type G" evidence="1">
    <location>
        <begin position="21"/>
        <end position="196"/>
    </location>
</feature>
<feature type="binding site" evidence="1">
    <location>
        <begin position="29"/>
        <end position="36"/>
    </location>
    <ligand>
        <name>GTP</name>
        <dbReference type="ChEBI" id="CHEBI:37565"/>
    </ligand>
</feature>
<feature type="binding site" evidence="1">
    <location>
        <position position="36"/>
    </location>
    <ligand>
        <name>Mg(2+)</name>
        <dbReference type="ChEBI" id="CHEBI:18420"/>
    </ligand>
</feature>
<feature type="binding site" evidence="1">
    <location>
        <begin position="55"/>
        <end position="59"/>
    </location>
    <ligand>
        <name>GTP</name>
        <dbReference type="ChEBI" id="CHEBI:37565"/>
    </ligand>
</feature>
<feature type="binding site" evidence="1">
    <location>
        <position position="57"/>
    </location>
    <ligand>
        <name>Mg(2+)</name>
        <dbReference type="ChEBI" id="CHEBI:18420"/>
    </ligand>
</feature>
<feature type="binding site" evidence="1">
    <location>
        <begin position="79"/>
        <end position="82"/>
    </location>
    <ligand>
        <name>GTP</name>
        <dbReference type="ChEBI" id="CHEBI:37565"/>
    </ligand>
</feature>
<feature type="binding site" evidence="1">
    <location>
        <begin position="146"/>
        <end position="149"/>
    </location>
    <ligand>
        <name>GTP</name>
        <dbReference type="ChEBI" id="CHEBI:37565"/>
    </ligand>
</feature>
<feature type="binding site" evidence="1">
    <location>
        <begin position="175"/>
        <end position="177"/>
    </location>
    <ligand>
        <name>GTP</name>
        <dbReference type="ChEBI" id="CHEBI:37565"/>
    </ligand>
</feature>
<keyword id="KW-0131">Cell cycle</keyword>
<keyword id="KW-0132">Cell division</keyword>
<keyword id="KW-0342">GTP-binding</keyword>
<keyword id="KW-0460">Magnesium</keyword>
<keyword id="KW-0479">Metal-binding</keyword>
<keyword id="KW-0547">Nucleotide-binding</keyword>
<keyword id="KW-1185">Reference proteome</keyword>
<keyword id="KW-0717">Septation</keyword>
<protein>
    <recommendedName>
        <fullName evidence="1">Probable GTP-binding protein EngB</fullName>
    </recommendedName>
</protein>
<comment type="function">
    <text evidence="1">Necessary for normal cell division and for the maintenance of normal septation.</text>
</comment>
<comment type="cofactor">
    <cofactor evidence="1">
        <name>Mg(2+)</name>
        <dbReference type="ChEBI" id="CHEBI:18420"/>
    </cofactor>
</comment>
<comment type="similarity">
    <text evidence="1">Belongs to the TRAFAC class TrmE-Era-EngA-EngB-Septin-like GTPase superfamily. EngB GTPase family.</text>
</comment>
<proteinExistence type="inferred from homology"/>
<evidence type="ECO:0000255" key="1">
    <source>
        <dbReference type="HAMAP-Rule" id="MF_00321"/>
    </source>
</evidence>
<reference key="1">
    <citation type="journal article" date="2009" name="Appl. Environ. Microbiol.">
        <title>Three genomes from the phylum Acidobacteria provide insight into the lifestyles of these microorganisms in soils.</title>
        <authorList>
            <person name="Ward N.L."/>
            <person name="Challacombe J.F."/>
            <person name="Janssen P.H."/>
            <person name="Henrissat B."/>
            <person name="Coutinho P.M."/>
            <person name="Wu M."/>
            <person name="Xie G."/>
            <person name="Haft D.H."/>
            <person name="Sait M."/>
            <person name="Badger J."/>
            <person name="Barabote R.D."/>
            <person name="Bradley B."/>
            <person name="Brettin T.S."/>
            <person name="Brinkac L.M."/>
            <person name="Bruce D."/>
            <person name="Creasy T."/>
            <person name="Daugherty S.C."/>
            <person name="Davidsen T.M."/>
            <person name="DeBoy R.T."/>
            <person name="Detter J.C."/>
            <person name="Dodson R.J."/>
            <person name="Durkin A.S."/>
            <person name="Ganapathy A."/>
            <person name="Gwinn-Giglio M."/>
            <person name="Han C.S."/>
            <person name="Khouri H."/>
            <person name="Kiss H."/>
            <person name="Kothari S.P."/>
            <person name="Madupu R."/>
            <person name="Nelson K.E."/>
            <person name="Nelson W.C."/>
            <person name="Paulsen I."/>
            <person name="Penn K."/>
            <person name="Ren Q."/>
            <person name="Rosovitz M.J."/>
            <person name="Selengut J.D."/>
            <person name="Shrivastava S."/>
            <person name="Sullivan S.A."/>
            <person name="Tapia R."/>
            <person name="Thompson L.S."/>
            <person name="Watkins K.L."/>
            <person name="Yang Q."/>
            <person name="Yu C."/>
            <person name="Zafar N."/>
            <person name="Zhou L."/>
            <person name="Kuske C.R."/>
        </authorList>
    </citation>
    <scope>NUCLEOTIDE SEQUENCE [LARGE SCALE GENOMIC DNA]</scope>
    <source>
        <strain>Ellin345</strain>
    </source>
</reference>
<organism>
    <name type="scientific">Koribacter versatilis (strain Ellin345)</name>
    <dbReference type="NCBI Taxonomy" id="204669"/>
    <lineage>
        <taxon>Bacteria</taxon>
        <taxon>Pseudomonadati</taxon>
        <taxon>Acidobacteriota</taxon>
        <taxon>Terriglobia</taxon>
        <taxon>Terriglobales</taxon>
        <taxon>Candidatus Korobacteraceae</taxon>
        <taxon>Candidatus Korobacter</taxon>
    </lineage>
</organism>
<gene>
    <name evidence="1" type="primary">engB</name>
    <name type="ordered locus">Acid345_1596</name>
</gene>
<accession>Q1IRA2</accession>